<comment type="function">
    <text evidence="1">Catalyzes the attachment of proline to tRNA(Pro) in a two-step reaction: proline is first activated by ATP to form Pro-AMP and then transferred to the acceptor end of tRNA(Pro).</text>
</comment>
<comment type="catalytic activity">
    <reaction evidence="1">
        <text>tRNA(Pro) + L-proline + ATP = L-prolyl-tRNA(Pro) + AMP + diphosphate</text>
        <dbReference type="Rhea" id="RHEA:14305"/>
        <dbReference type="Rhea" id="RHEA-COMP:9700"/>
        <dbReference type="Rhea" id="RHEA-COMP:9702"/>
        <dbReference type="ChEBI" id="CHEBI:30616"/>
        <dbReference type="ChEBI" id="CHEBI:33019"/>
        <dbReference type="ChEBI" id="CHEBI:60039"/>
        <dbReference type="ChEBI" id="CHEBI:78442"/>
        <dbReference type="ChEBI" id="CHEBI:78532"/>
        <dbReference type="ChEBI" id="CHEBI:456215"/>
        <dbReference type="EC" id="6.1.1.15"/>
    </reaction>
</comment>
<comment type="subunit">
    <text evidence="1">Homodimer.</text>
</comment>
<comment type="subcellular location">
    <subcellularLocation>
        <location evidence="1">Cytoplasm</location>
    </subcellularLocation>
</comment>
<comment type="domain">
    <text evidence="1">Consists of three domains: the N-terminal catalytic domain, the anticodon-binding domain and the C-terminal extension.</text>
</comment>
<comment type="similarity">
    <text evidence="1">Belongs to the class-II aminoacyl-tRNA synthetase family. ProS type 3 subfamily.</text>
</comment>
<dbReference type="EC" id="6.1.1.15" evidence="1"/>
<dbReference type="EMBL" id="CP000504">
    <property type="protein sequence ID" value="ABL87998.1"/>
    <property type="molecule type" value="Genomic_DNA"/>
</dbReference>
<dbReference type="RefSeq" id="WP_011762574.1">
    <property type="nucleotide sequence ID" value="NC_008701.1"/>
</dbReference>
<dbReference type="SMR" id="A1RSR6"/>
<dbReference type="STRING" id="384616.Pisl_0822"/>
<dbReference type="GeneID" id="4616670"/>
<dbReference type="KEGG" id="pis:Pisl_0822"/>
<dbReference type="eggNOG" id="arCOG00402">
    <property type="taxonomic scope" value="Archaea"/>
</dbReference>
<dbReference type="HOGENOM" id="CLU_001882_4_2_2"/>
<dbReference type="OrthoDB" id="7375at2157"/>
<dbReference type="Proteomes" id="UP000002595">
    <property type="component" value="Chromosome"/>
</dbReference>
<dbReference type="GO" id="GO:0017101">
    <property type="term" value="C:aminoacyl-tRNA synthetase multienzyme complex"/>
    <property type="evidence" value="ECO:0007669"/>
    <property type="project" value="TreeGrafter"/>
</dbReference>
<dbReference type="GO" id="GO:0005737">
    <property type="term" value="C:cytoplasm"/>
    <property type="evidence" value="ECO:0007669"/>
    <property type="project" value="UniProtKB-SubCell"/>
</dbReference>
<dbReference type="GO" id="GO:0005524">
    <property type="term" value="F:ATP binding"/>
    <property type="evidence" value="ECO:0007669"/>
    <property type="project" value="UniProtKB-UniRule"/>
</dbReference>
<dbReference type="GO" id="GO:0004827">
    <property type="term" value="F:proline-tRNA ligase activity"/>
    <property type="evidence" value="ECO:0007669"/>
    <property type="project" value="UniProtKB-UniRule"/>
</dbReference>
<dbReference type="GO" id="GO:0006433">
    <property type="term" value="P:prolyl-tRNA aminoacylation"/>
    <property type="evidence" value="ECO:0007669"/>
    <property type="project" value="UniProtKB-UniRule"/>
</dbReference>
<dbReference type="CDD" id="cd00862">
    <property type="entry name" value="ProRS_anticodon_zinc"/>
    <property type="match status" value="1"/>
</dbReference>
<dbReference type="FunFam" id="3.40.50.800:FF:000005">
    <property type="entry name" value="bifunctional glutamate/proline--tRNA ligase"/>
    <property type="match status" value="1"/>
</dbReference>
<dbReference type="FunFam" id="3.30.930.10:FF:000037">
    <property type="entry name" value="Proline--tRNA ligase"/>
    <property type="match status" value="1"/>
</dbReference>
<dbReference type="Gene3D" id="3.40.50.800">
    <property type="entry name" value="Anticodon-binding domain"/>
    <property type="match status" value="1"/>
</dbReference>
<dbReference type="Gene3D" id="3.30.930.10">
    <property type="entry name" value="Bira Bifunctional Protein, Domain 2"/>
    <property type="match status" value="1"/>
</dbReference>
<dbReference type="Gene3D" id="3.30.110.30">
    <property type="entry name" value="C-terminal domain of ProRS"/>
    <property type="match status" value="1"/>
</dbReference>
<dbReference type="HAMAP" id="MF_01571">
    <property type="entry name" value="Pro_tRNA_synth_type3"/>
    <property type="match status" value="1"/>
</dbReference>
<dbReference type="InterPro" id="IPR002314">
    <property type="entry name" value="aa-tRNA-synt_IIb"/>
</dbReference>
<dbReference type="InterPro" id="IPR006195">
    <property type="entry name" value="aa-tRNA-synth_II"/>
</dbReference>
<dbReference type="InterPro" id="IPR045864">
    <property type="entry name" value="aa-tRNA-synth_II/BPL/LPL"/>
</dbReference>
<dbReference type="InterPro" id="IPR004154">
    <property type="entry name" value="Anticodon-bd"/>
</dbReference>
<dbReference type="InterPro" id="IPR036621">
    <property type="entry name" value="Anticodon-bd_dom_sf"/>
</dbReference>
<dbReference type="InterPro" id="IPR002316">
    <property type="entry name" value="Pro-tRNA-ligase_IIa"/>
</dbReference>
<dbReference type="InterPro" id="IPR004499">
    <property type="entry name" value="Pro-tRNA-ligase_IIa_arc-type"/>
</dbReference>
<dbReference type="InterPro" id="IPR016061">
    <property type="entry name" value="Pro-tRNA_ligase_II_C"/>
</dbReference>
<dbReference type="InterPro" id="IPR017449">
    <property type="entry name" value="Pro-tRNA_synth_II"/>
</dbReference>
<dbReference type="NCBIfam" id="TIGR00408">
    <property type="entry name" value="proS_fam_I"/>
    <property type="match status" value="1"/>
</dbReference>
<dbReference type="PANTHER" id="PTHR43382:SF2">
    <property type="entry name" value="BIFUNCTIONAL GLUTAMATE_PROLINE--TRNA LIGASE"/>
    <property type="match status" value="1"/>
</dbReference>
<dbReference type="PANTHER" id="PTHR43382">
    <property type="entry name" value="PROLYL-TRNA SYNTHETASE"/>
    <property type="match status" value="1"/>
</dbReference>
<dbReference type="Pfam" id="PF03129">
    <property type="entry name" value="HGTP_anticodon"/>
    <property type="match status" value="1"/>
</dbReference>
<dbReference type="Pfam" id="PF09180">
    <property type="entry name" value="ProRS-C_1"/>
    <property type="match status" value="1"/>
</dbReference>
<dbReference type="Pfam" id="PF00587">
    <property type="entry name" value="tRNA-synt_2b"/>
    <property type="match status" value="1"/>
</dbReference>
<dbReference type="PRINTS" id="PR01046">
    <property type="entry name" value="TRNASYNTHPRO"/>
</dbReference>
<dbReference type="SMART" id="SM00946">
    <property type="entry name" value="ProRS-C_1"/>
    <property type="match status" value="1"/>
</dbReference>
<dbReference type="SUPFAM" id="SSF64586">
    <property type="entry name" value="C-terminal domain of ProRS"/>
    <property type="match status" value="1"/>
</dbReference>
<dbReference type="SUPFAM" id="SSF52954">
    <property type="entry name" value="Class II aaRS ABD-related"/>
    <property type="match status" value="1"/>
</dbReference>
<dbReference type="SUPFAM" id="SSF55681">
    <property type="entry name" value="Class II aaRS and biotin synthetases"/>
    <property type="match status" value="1"/>
</dbReference>
<dbReference type="PROSITE" id="PS50862">
    <property type="entry name" value="AA_TRNA_LIGASE_II"/>
    <property type="match status" value="1"/>
</dbReference>
<gene>
    <name evidence="1" type="primary">proS</name>
    <name type="ordered locus">Pisl_0822</name>
</gene>
<keyword id="KW-0030">Aminoacyl-tRNA synthetase</keyword>
<keyword id="KW-0067">ATP-binding</keyword>
<keyword id="KW-0963">Cytoplasm</keyword>
<keyword id="KW-0436">Ligase</keyword>
<keyword id="KW-0547">Nucleotide-binding</keyword>
<keyword id="KW-0648">Protein biosynthesis</keyword>
<accession>A1RSR6</accession>
<evidence type="ECO:0000255" key="1">
    <source>
        <dbReference type="HAMAP-Rule" id="MF_01571"/>
    </source>
</evidence>
<name>SYP_PYRIL</name>
<protein>
    <recommendedName>
        <fullName evidence="1">Proline--tRNA ligase</fullName>
        <ecNumber evidence="1">6.1.1.15</ecNumber>
    </recommendedName>
    <alternativeName>
        <fullName evidence="1">Prolyl-tRNA synthetase</fullName>
        <shortName evidence="1">ProRS</shortName>
    </alternativeName>
</protein>
<organism>
    <name type="scientific">Pyrobaculum islandicum (strain DSM 4184 / JCM 9189 / GEO3)</name>
    <dbReference type="NCBI Taxonomy" id="384616"/>
    <lineage>
        <taxon>Archaea</taxon>
        <taxon>Thermoproteota</taxon>
        <taxon>Thermoprotei</taxon>
        <taxon>Thermoproteales</taxon>
        <taxon>Thermoproteaceae</taxon>
        <taxon>Pyrobaculum</taxon>
    </lineage>
</organism>
<reference key="1">
    <citation type="submission" date="2006-12" db="EMBL/GenBank/DDBJ databases">
        <title>Complete sequence of Pyrobaculum islandicum DSM 4184.</title>
        <authorList>
            <person name="Copeland A."/>
            <person name="Lucas S."/>
            <person name="Lapidus A."/>
            <person name="Barry K."/>
            <person name="Detter J.C."/>
            <person name="Glavina del Rio T."/>
            <person name="Dalin E."/>
            <person name="Tice H."/>
            <person name="Pitluck S."/>
            <person name="Meincke L."/>
            <person name="Brettin T."/>
            <person name="Bruce D."/>
            <person name="Han C."/>
            <person name="Tapia R."/>
            <person name="Gilna P."/>
            <person name="Schmutz J."/>
            <person name="Larimer F."/>
            <person name="Land M."/>
            <person name="Hauser L."/>
            <person name="Kyrpides N."/>
            <person name="Mikhailova N."/>
            <person name="Cozen A.E."/>
            <person name="Fitz-Gibbon S.T."/>
            <person name="House C.H."/>
            <person name="Saltikov C."/>
            <person name="Lowe T."/>
            <person name="Richardson P."/>
        </authorList>
    </citation>
    <scope>NUCLEOTIDE SEQUENCE [LARGE SCALE GENOMIC DNA]</scope>
    <source>
        <strain>DSM 4184 / JCM 9189 / GEO3</strain>
    </source>
</reference>
<sequence>MELLREAKPYTKDKLKTNLIEWFHWLLREAELYDVRYPVKGAYVWRPYGMKLRRNVENLIRRIHDETGHEEVLFPVFIPYEFFSKESQHIRGFEKEVFWVSKGGEGGERLILRPTSETAIMPMVKLWIQDYKDLPLRLYQIVSVFRAETKMTHPMIRLREISMFKEAHTVHATREDAERQIREAVEIYKRIFDEMCLAYMINKRPNWDKFAGAEYTIAFDTILPDGRTLQIGTVHYLGVNFTKVFEVTYLDIDGTRKLAHTTSYGISERSIAAMLITHGDDGGTTLPPKLAPIQVVIVPIFYGEEEMPTVMKFVDEVYRMLRDVGIRIHIDDRRDKTPGWKFYYWELKGVPLRIEVGRRDIEKRQVVVTRRDTLEKYAVSLGELVDAVKQLMSVVEDNLRKRAWEDLRNRLVKVEKVEDAKNAIREGKVVEVPWSGDDECGVKLQELVGADALGIPMDTDPSIGGFDMRDLACKEKRAEFWLRLSERY</sequence>
<feature type="chain" id="PRO_0000288423" description="Proline--tRNA ligase">
    <location>
        <begin position="1"/>
        <end position="488"/>
    </location>
</feature>
<proteinExistence type="inferred from homology"/>